<feature type="signal peptide" evidence="2">
    <location>
        <begin position="1"/>
        <end position="50"/>
    </location>
</feature>
<feature type="chain" id="PRO_0000149581" description="Outer capsid glycoprotein VP7" evidence="2">
    <location>
        <begin position="51"/>
        <end position="326"/>
    </location>
</feature>
<feature type="region of interest" description="CNP motif; interaction with ITGAV/ITGB3" evidence="2">
    <location>
        <begin position="165"/>
        <end position="167"/>
    </location>
</feature>
<feature type="region of interest" description="LVD motif; interaction with ITGA4/ITGB1 heterodimer" evidence="2">
    <location>
        <begin position="237"/>
        <end position="239"/>
    </location>
</feature>
<feature type="region of interest" description="GPR motif; interaction with ITGAX/ITGB2" evidence="2">
    <location>
        <begin position="253"/>
        <end position="255"/>
    </location>
</feature>
<feature type="binding site" evidence="2">
    <location>
        <position position="95"/>
    </location>
    <ligand>
        <name>Ca(2+)</name>
        <dbReference type="ChEBI" id="CHEBI:29108"/>
        <label>1</label>
    </ligand>
</feature>
<feature type="binding site" evidence="2">
    <location>
        <position position="177"/>
    </location>
    <ligand>
        <name>Ca(2+)</name>
        <dbReference type="ChEBI" id="CHEBI:29108"/>
        <label>2</label>
    </ligand>
</feature>
<feature type="binding site" evidence="2">
    <location>
        <position position="206"/>
    </location>
    <ligand>
        <name>Ca(2+)</name>
        <dbReference type="ChEBI" id="CHEBI:29108"/>
        <label>1</label>
    </ligand>
</feature>
<feature type="binding site" evidence="2">
    <location>
        <position position="214"/>
    </location>
    <ligand>
        <name>Ca(2+)</name>
        <dbReference type="ChEBI" id="CHEBI:29108"/>
        <label>1</label>
    </ligand>
</feature>
<feature type="binding site" evidence="2">
    <location>
        <position position="216"/>
    </location>
    <ligand>
        <name>Ca(2+)</name>
        <dbReference type="ChEBI" id="CHEBI:29108"/>
        <label>1</label>
    </ligand>
</feature>
<feature type="binding site" evidence="2">
    <location>
        <position position="228"/>
    </location>
    <ligand>
        <name>Ca(2+)</name>
        <dbReference type="ChEBI" id="CHEBI:29108"/>
        <label>2</label>
    </ligand>
</feature>
<feature type="binding site" evidence="2">
    <location>
        <position position="229"/>
    </location>
    <ligand>
        <name>Ca(2+)</name>
        <dbReference type="ChEBI" id="CHEBI:29108"/>
        <label>2</label>
    </ligand>
</feature>
<feature type="binding site" evidence="2">
    <location>
        <position position="231"/>
    </location>
    <ligand>
        <name>Ca(2+)</name>
        <dbReference type="ChEBI" id="CHEBI:29108"/>
        <label>2</label>
    </ligand>
</feature>
<feature type="binding site" evidence="2">
    <location>
        <position position="301"/>
    </location>
    <ligand>
        <name>Ca(2+)</name>
        <dbReference type="ChEBI" id="CHEBI:29108"/>
        <label>2</label>
    </ligand>
</feature>
<feature type="glycosylation site" description="N-linked (GlcNAc...) asparagine; by host" evidence="1">
    <location>
        <position position="69"/>
    </location>
</feature>
<feature type="glycosylation site" description="N-linked (GlcNAc...) asparagine; by host" evidence="1">
    <location>
        <position position="145"/>
    </location>
</feature>
<feature type="glycosylation site" description="N-linked (GlcNAc...) asparagine; by host" evidence="1">
    <location>
        <position position="270"/>
    </location>
</feature>
<feature type="disulfide bond" evidence="2">
    <location>
        <begin position="82"/>
        <end position="135"/>
    </location>
</feature>
<feature type="disulfide bond" evidence="2">
    <location>
        <begin position="165"/>
        <end position="249"/>
    </location>
</feature>
<feature type="disulfide bond" evidence="2">
    <location>
        <begin position="191"/>
        <end position="244"/>
    </location>
</feature>
<feature type="disulfide bond" evidence="2">
    <location>
        <begin position="196"/>
        <end position="207"/>
    </location>
</feature>
<feature type="splice variant" id="VSP_038584" description="In isoform 2." evidence="3">
    <location>
        <begin position="1"/>
        <end position="29"/>
    </location>
</feature>
<keyword id="KW-0024">Alternative initiation</keyword>
<keyword id="KW-0106">Calcium</keyword>
<keyword id="KW-0167">Capsid protein</keyword>
<keyword id="KW-1015">Disulfide bond</keyword>
<keyword id="KW-0325">Glycoprotein</keyword>
<keyword id="KW-1038">Host endoplasmic reticulum</keyword>
<keyword id="KW-0945">Host-virus interaction</keyword>
<keyword id="KW-0479">Metal-binding</keyword>
<keyword id="KW-1152">Outer capsid protein</keyword>
<keyword id="KW-0732">Signal</keyword>
<keyword id="KW-1146">T=13 icosahedral capsid protein</keyword>
<keyword id="KW-0946">Virion</keyword>
<name>VP7_ROTBA</name>
<sequence>MYGIEYTTFLIYLISIILFNYILKSITRMMDYIIYKFLLIVTIASIVVNAQNYGINLPITGSMDASYVNATKDKPFLTSTLCLYYPTEARTEINDNEWTSTLSQLFLTKGWPTGSVYFKEYDDIATFSVDPQLYCDYNIVLMRYNSSLELDMSELANLILNEWLCNPMDITLYYYQQTDEANKWIAMGQSCTIKVCPLNTQTLGIGCQTTNARTFEEVATAEKLVITDVVDGVNHKLDVTTATCTIRNCKKLGPRENVAVIQVGGADILNITSDPTTAPQTERMMRINWKKWWQVFYTIVDYVNQIVQAMSKMSGSLNSAAFYYRV</sequence>
<evidence type="ECO:0000255" key="1"/>
<evidence type="ECO:0000255" key="2">
    <source>
        <dbReference type="HAMAP-Rule" id="MF_04131"/>
    </source>
</evidence>
<evidence type="ECO:0000305" key="3"/>
<comment type="function">
    <text evidence="2">Calcium-binding protein that interacts with rotavirus cell receptors once the initial attachment by VP4 has been achieved. Rotavirus attachment and entry into the host cell probably involves multiple sequential contacts between the outer capsid proteins VP4 and VP7, and the cell receptors. Following entry into the host cell, low intracellular or intravesicular Ca(2+) concentration probably causes the calcium-stabilized VP7 trimers to dissociate from the virion. This step is probably necessary for the membrane-disrupting entry step and the release of VP4, which is locked onto the virion by VP7.</text>
</comment>
<comment type="subunit">
    <text evidence="2">Homotrimer; disulfide-linked. 2 Ca(2+) ions bound at each subunit interface in the trimer hold the trimer together. Interacts with the intermediate capsid protein VP6. Interacts with the outer capsid protein VP5*.</text>
</comment>
<comment type="subcellular location">
    <subcellularLocation>
        <location evidence="2">Virion</location>
    </subcellularLocation>
    <subcellularLocation>
        <location evidence="2">Host endoplasmic reticulum lumen</location>
    </subcellularLocation>
    <text evidence="2">The outer layer contains 780 copies of VP7, grouped as 260 trimers. Immature double-layered particles assembled in the cytoplasm bud across the membrane of the endoplasmic reticulum, acquiring during this process a transient lipid membrane that is modified with the ER resident viral glycoproteins NSP4 and VP7; these enveloped particles also contain VP4. As the particles move towards the interior of the ER cisternae, the transient lipid membrane and the non-structural protein NSP4 are lost, while the virus surface proteins VP4 and VP7 rearrange to form the outermost virus protein layer, yielding mature infectious triple-layered particles.</text>
</comment>
<comment type="alternative products">
    <event type="alternative initiation"/>
    <isoform>
        <id>Q00253-1</id>
        <name>1</name>
        <sequence type="displayed"/>
    </isoform>
    <isoform>
        <id>Q00253-2</id>
        <name>2</name>
        <sequence type="described" ref="VSP_038584"/>
    </isoform>
</comment>
<comment type="PTM">
    <text evidence="2">N-glycosylated.</text>
</comment>
<comment type="PTM">
    <text evidence="2">The N-terminus is blocked possibly by pyroglutamic acid.</text>
</comment>
<comment type="miscellaneous">
    <text evidence="2">Some rotavirus strains are neuraminidase-sensitive and require sialic acid to attach to the cell surface. Some rotavirus strains are integrin-dependent. Some rotavirus strains depend on ganglioside for their entry into the host cell. Hsp70 also seems to be involved in the entry of some strains.</text>
</comment>
<comment type="miscellaneous">
    <text evidence="2">In group A rotaviruses, VP7 defines the G serotype.</text>
</comment>
<comment type="miscellaneous">
    <molecule>Isoform 2</molecule>
    <text evidence="3">Produced by alternative initiation at Met-30 of isoform 1.</text>
</comment>
<comment type="similarity">
    <text evidence="2">Belongs to the rotavirus VP7 family.</text>
</comment>
<reference key="1">
    <citation type="journal article" date="1991" name="J. Gen. Virol.">
        <title>Molecular and antigenic analyses of serotypes 8 and 10 of bovine rotaviruses in Thailand.</title>
        <authorList>
            <person name="Taniguchi K."/>
            <person name="Urasawa T."/>
            <person name="Pongsuwanna Y."/>
            <person name="Choonthanom M."/>
            <person name="Jayavasu C."/>
            <person name="Urasawa S."/>
        </authorList>
    </citation>
    <scope>NUCLEOTIDE SEQUENCE [MRNA]</scope>
</reference>
<dbReference type="EMBL" id="D01055">
    <property type="protein sequence ID" value="BAA00857.1"/>
    <property type="molecule type" value="mRNA"/>
</dbReference>
<dbReference type="SMR" id="Q00253"/>
<dbReference type="GO" id="GO:0044166">
    <property type="term" value="C:host cell endoplasmic reticulum lumen"/>
    <property type="evidence" value="ECO:0007669"/>
    <property type="project" value="UniProtKB-SubCell"/>
</dbReference>
<dbReference type="GO" id="GO:0039621">
    <property type="term" value="C:T=13 icosahedral viral capsid"/>
    <property type="evidence" value="ECO:0007669"/>
    <property type="project" value="UniProtKB-UniRule"/>
</dbReference>
<dbReference type="GO" id="GO:0039624">
    <property type="term" value="C:viral outer capsid"/>
    <property type="evidence" value="ECO:0007669"/>
    <property type="project" value="UniProtKB-UniRule"/>
</dbReference>
<dbReference type="GO" id="GO:0046872">
    <property type="term" value="F:metal ion binding"/>
    <property type="evidence" value="ECO:0007669"/>
    <property type="project" value="UniProtKB-KW"/>
</dbReference>
<dbReference type="FunFam" id="2.60.120.800:FF:000001">
    <property type="entry name" value="Outer capsid glycoprotein VP7"/>
    <property type="match status" value="1"/>
</dbReference>
<dbReference type="Gene3D" id="3.40.50.11130">
    <property type="entry name" value="Glycoprotein VP7, domain 1"/>
    <property type="match status" value="1"/>
</dbReference>
<dbReference type="Gene3D" id="2.60.120.800">
    <property type="entry name" value="Rotavirus outer-layer protein VP7, domain 2"/>
    <property type="match status" value="1"/>
</dbReference>
<dbReference type="HAMAP" id="MF_04130">
    <property type="entry name" value="Rota_VP7"/>
    <property type="match status" value="1"/>
</dbReference>
<dbReference type="HAMAP" id="MF_04131">
    <property type="entry name" value="Rota_VP7_A"/>
    <property type="match status" value="1"/>
</dbReference>
<dbReference type="InterPro" id="IPR001963">
    <property type="entry name" value="VP7"/>
</dbReference>
<dbReference type="InterPro" id="IPR042207">
    <property type="entry name" value="VP7_1"/>
</dbReference>
<dbReference type="InterPro" id="IPR042210">
    <property type="entry name" value="VP7_2"/>
</dbReference>
<dbReference type="Pfam" id="PF00434">
    <property type="entry name" value="VP7"/>
    <property type="match status" value="1"/>
</dbReference>
<protein>
    <recommendedName>
        <fullName evidence="2">Outer capsid glycoprotein VP7</fullName>
    </recommendedName>
</protein>
<proteinExistence type="evidence at transcript level"/>
<organismHost>
    <name type="scientific">Bos taurus</name>
    <name type="common">Bovine</name>
    <dbReference type="NCBI Taxonomy" id="9913"/>
</organismHost>
<organism>
    <name type="scientific">Rotavirus A (isolate RVA/Cow/Thailand/A44/1988/G10P8[11])</name>
    <name type="common">RV-A</name>
    <dbReference type="NCBI Taxonomy" id="1835658"/>
    <lineage>
        <taxon>Viruses</taxon>
        <taxon>Riboviria</taxon>
        <taxon>Orthornavirae</taxon>
        <taxon>Duplornaviricota</taxon>
        <taxon>Resentoviricetes</taxon>
        <taxon>Reovirales</taxon>
        <taxon>Sedoreoviridae</taxon>
        <taxon>Rotavirus</taxon>
        <taxon>Rotavirus A</taxon>
    </lineage>
</organism>
<accession>Q00253</accession>